<proteinExistence type="inferred from homology"/>
<comment type="catalytic activity">
    <reaction evidence="1">
        <text>L-arginine + H2O = L-citrulline + NH4(+)</text>
        <dbReference type="Rhea" id="RHEA:19597"/>
        <dbReference type="ChEBI" id="CHEBI:15377"/>
        <dbReference type="ChEBI" id="CHEBI:28938"/>
        <dbReference type="ChEBI" id="CHEBI:32682"/>
        <dbReference type="ChEBI" id="CHEBI:57743"/>
        <dbReference type="EC" id="3.5.3.6"/>
    </reaction>
</comment>
<comment type="pathway">
    <text evidence="1">Amino-acid degradation; L-arginine degradation via ADI pathway; carbamoyl phosphate from L-arginine: step 1/2.</text>
</comment>
<comment type="subcellular location">
    <subcellularLocation>
        <location evidence="1">Cytoplasm</location>
    </subcellularLocation>
</comment>
<comment type="similarity">
    <text evidence="1">Belongs to the arginine deiminase family.</text>
</comment>
<sequence length="409" mass="46653">MSSHPIQVFSEIGKLKKVMLHRPGKELENLLPDYLERLLFDDIPFLEDAQKEHDAFAQALRDEGIEVLYLEQLAAESLTSPEIRDQFIEEYLDEANIRDRQTKVAIRELLHGIKDNQELVEKTMAGIQKVELPEIPDEAKDLTDLVESEYPFAIDPMPNLYFTRDPFATIGNAVSLNHMFADTRNRETLYGKYIFKYHPVYGGKVDLVYNREEDTRIEGGDELVLSKDVLAVGISQRTDAASIEKLLVNIFKKNVGFKKVLAFEFANNRKFMHLDTVFTMVDYDKFTIHPEIEGDLHVYSVTYENEKLKIVEEKGDLAELLAQNLGVEKVHLIRCGGGNIVAAAREQWNDGSNTLTIAPGVVVVYDRNTVTNKILEEYGLRLIKIRGSELVRGRGGPRCMSMPFEREEV</sequence>
<evidence type="ECO:0000255" key="1">
    <source>
        <dbReference type="HAMAP-Rule" id="MF_00242"/>
    </source>
</evidence>
<organism>
    <name type="scientific">Streptococcus pneumoniae serotype 19F (strain G54)</name>
    <dbReference type="NCBI Taxonomy" id="512566"/>
    <lineage>
        <taxon>Bacteria</taxon>
        <taxon>Bacillati</taxon>
        <taxon>Bacillota</taxon>
        <taxon>Bacilli</taxon>
        <taxon>Lactobacillales</taxon>
        <taxon>Streptococcaceae</taxon>
        <taxon>Streptococcus</taxon>
    </lineage>
</organism>
<dbReference type="EC" id="3.5.3.6" evidence="1"/>
<dbReference type="EMBL" id="CP001015">
    <property type="protein sequence ID" value="ACF56759.1"/>
    <property type="molecule type" value="Genomic_DNA"/>
</dbReference>
<dbReference type="SMR" id="B5E3F7"/>
<dbReference type="KEGG" id="spx:SPG_2088"/>
<dbReference type="HOGENOM" id="CLU_052662_0_1_9"/>
<dbReference type="UniPathway" id="UPA00254">
    <property type="reaction ID" value="UER00364"/>
</dbReference>
<dbReference type="GO" id="GO:0005737">
    <property type="term" value="C:cytoplasm"/>
    <property type="evidence" value="ECO:0007669"/>
    <property type="project" value="UniProtKB-SubCell"/>
</dbReference>
<dbReference type="GO" id="GO:0016990">
    <property type="term" value="F:arginine deiminase activity"/>
    <property type="evidence" value="ECO:0007669"/>
    <property type="project" value="UniProtKB-UniRule"/>
</dbReference>
<dbReference type="GO" id="GO:0019547">
    <property type="term" value="P:arginine catabolic process to ornithine"/>
    <property type="evidence" value="ECO:0007669"/>
    <property type="project" value="UniProtKB-UniRule"/>
</dbReference>
<dbReference type="GO" id="GO:0019546">
    <property type="term" value="P:arginine deiminase pathway"/>
    <property type="evidence" value="ECO:0007669"/>
    <property type="project" value="TreeGrafter"/>
</dbReference>
<dbReference type="FunFam" id="1.10.3930.10:FF:000003">
    <property type="entry name" value="Arginine deiminase"/>
    <property type="match status" value="1"/>
</dbReference>
<dbReference type="Gene3D" id="1.10.3930.10">
    <property type="entry name" value="Arginine deiminase"/>
    <property type="match status" value="1"/>
</dbReference>
<dbReference type="Gene3D" id="3.75.10.10">
    <property type="entry name" value="L-arginine/glycine Amidinotransferase, Chain A"/>
    <property type="match status" value="1"/>
</dbReference>
<dbReference type="HAMAP" id="MF_00242">
    <property type="entry name" value="Arg_deiminase"/>
    <property type="match status" value="1"/>
</dbReference>
<dbReference type="InterPro" id="IPR003876">
    <property type="entry name" value="Arg_deiminase"/>
</dbReference>
<dbReference type="NCBIfam" id="TIGR01078">
    <property type="entry name" value="arcA"/>
    <property type="match status" value="1"/>
</dbReference>
<dbReference type="NCBIfam" id="NF002381">
    <property type="entry name" value="PRK01388.1"/>
    <property type="match status" value="1"/>
</dbReference>
<dbReference type="PANTHER" id="PTHR47271">
    <property type="entry name" value="ARGININE DEIMINASE"/>
    <property type="match status" value="1"/>
</dbReference>
<dbReference type="PANTHER" id="PTHR47271:SF2">
    <property type="entry name" value="ARGININE DEIMINASE"/>
    <property type="match status" value="1"/>
</dbReference>
<dbReference type="Pfam" id="PF02274">
    <property type="entry name" value="ADI"/>
    <property type="match status" value="1"/>
</dbReference>
<dbReference type="PIRSF" id="PIRSF006356">
    <property type="entry name" value="Arg_deiminase"/>
    <property type="match status" value="1"/>
</dbReference>
<dbReference type="PRINTS" id="PR01466">
    <property type="entry name" value="ARGDEIMINASE"/>
</dbReference>
<dbReference type="SUPFAM" id="SSF55909">
    <property type="entry name" value="Pentein"/>
    <property type="match status" value="1"/>
</dbReference>
<gene>
    <name evidence="1" type="primary">arcA</name>
    <name type="ordered locus">SPG_2088</name>
</gene>
<protein>
    <recommendedName>
        <fullName evidence="1">Arginine deiminase</fullName>
        <shortName evidence="1">ADI</shortName>
        <ecNumber evidence="1">3.5.3.6</ecNumber>
    </recommendedName>
    <alternativeName>
        <fullName evidence="1">Arginine dihydrolase</fullName>
        <shortName evidence="1">AD</shortName>
    </alternativeName>
</protein>
<name>ARCA_STRP4</name>
<accession>B5E3F7</accession>
<feature type="chain" id="PRO_1000100746" description="Arginine deiminase">
    <location>
        <begin position="1"/>
        <end position="409"/>
    </location>
</feature>
<feature type="active site" description="Amidino-cysteine intermediate" evidence="1">
    <location>
        <position position="399"/>
    </location>
</feature>
<keyword id="KW-0056">Arginine metabolism</keyword>
<keyword id="KW-0963">Cytoplasm</keyword>
<keyword id="KW-0378">Hydrolase</keyword>
<reference key="1">
    <citation type="journal article" date="2001" name="Microb. Drug Resist.">
        <title>Annotated draft genomic sequence from a Streptococcus pneumoniae type 19F clinical isolate.</title>
        <authorList>
            <person name="Dopazo J."/>
            <person name="Mendoza A."/>
            <person name="Herrero J."/>
            <person name="Caldara F."/>
            <person name="Humbert Y."/>
            <person name="Friedli L."/>
            <person name="Guerrier M."/>
            <person name="Grand-Schenk E."/>
            <person name="Gandin C."/>
            <person name="de Francesco M."/>
            <person name="Polissi A."/>
            <person name="Buell G."/>
            <person name="Feger G."/>
            <person name="Garcia E."/>
            <person name="Peitsch M."/>
            <person name="Garcia-Bustos J.F."/>
        </authorList>
    </citation>
    <scope>NUCLEOTIDE SEQUENCE [LARGE SCALE GENOMIC DNA]</scope>
    <source>
        <strain>G54</strain>
    </source>
</reference>
<reference key="2">
    <citation type="submission" date="2008-03" db="EMBL/GenBank/DDBJ databases">
        <title>Pneumococcal beta glucoside metabolism investigated by whole genome comparison.</title>
        <authorList>
            <person name="Mulas L."/>
            <person name="Trappetti C."/>
            <person name="Hakenbeck R."/>
            <person name="Iannelli F."/>
            <person name="Pozzi G."/>
            <person name="Davidsen T.M."/>
            <person name="Tettelin H."/>
            <person name="Oggioni M."/>
        </authorList>
    </citation>
    <scope>NUCLEOTIDE SEQUENCE [LARGE SCALE GENOMIC DNA]</scope>
    <source>
        <strain>G54</strain>
    </source>
</reference>